<keyword id="KW-0880">Kelch repeat</keyword>
<keyword id="KW-1185">Reference proteome</keyword>
<keyword id="KW-0677">Repeat</keyword>
<gene>
    <name type="ordered locus">At3g46050</name>
    <name type="ORF">F12M12.20</name>
</gene>
<proteinExistence type="predicted"/>
<reference key="1">
    <citation type="journal article" date="2000" name="Nature">
        <title>Sequence and analysis of chromosome 3 of the plant Arabidopsis thaliana.</title>
        <authorList>
            <person name="Salanoubat M."/>
            <person name="Lemcke K."/>
            <person name="Rieger M."/>
            <person name="Ansorge W."/>
            <person name="Unseld M."/>
            <person name="Fartmann B."/>
            <person name="Valle G."/>
            <person name="Bloecker H."/>
            <person name="Perez-Alonso M."/>
            <person name="Obermaier B."/>
            <person name="Delseny M."/>
            <person name="Boutry M."/>
            <person name="Grivell L.A."/>
            <person name="Mache R."/>
            <person name="Puigdomenech P."/>
            <person name="De Simone V."/>
            <person name="Choisne N."/>
            <person name="Artiguenave F."/>
            <person name="Robert C."/>
            <person name="Brottier P."/>
            <person name="Wincker P."/>
            <person name="Cattolico L."/>
            <person name="Weissenbach J."/>
            <person name="Saurin W."/>
            <person name="Quetier F."/>
            <person name="Schaefer M."/>
            <person name="Mueller-Auer S."/>
            <person name="Gabel C."/>
            <person name="Fuchs M."/>
            <person name="Benes V."/>
            <person name="Wurmbach E."/>
            <person name="Drzonek H."/>
            <person name="Erfle H."/>
            <person name="Jordan N."/>
            <person name="Bangert S."/>
            <person name="Wiedelmann R."/>
            <person name="Kranz H."/>
            <person name="Voss H."/>
            <person name="Holland R."/>
            <person name="Brandt P."/>
            <person name="Nyakatura G."/>
            <person name="Vezzi A."/>
            <person name="D'Angelo M."/>
            <person name="Pallavicini A."/>
            <person name="Toppo S."/>
            <person name="Simionati B."/>
            <person name="Conrad A."/>
            <person name="Hornischer K."/>
            <person name="Kauer G."/>
            <person name="Loehnert T.-H."/>
            <person name="Nordsiek G."/>
            <person name="Reichelt J."/>
            <person name="Scharfe M."/>
            <person name="Schoen O."/>
            <person name="Bargues M."/>
            <person name="Terol J."/>
            <person name="Climent J."/>
            <person name="Navarro P."/>
            <person name="Collado C."/>
            <person name="Perez-Perez A."/>
            <person name="Ottenwaelder B."/>
            <person name="Duchemin D."/>
            <person name="Cooke R."/>
            <person name="Laudie M."/>
            <person name="Berger-Llauro C."/>
            <person name="Purnelle B."/>
            <person name="Masuy D."/>
            <person name="de Haan M."/>
            <person name="Maarse A.C."/>
            <person name="Alcaraz J.-P."/>
            <person name="Cottet A."/>
            <person name="Casacuberta E."/>
            <person name="Monfort A."/>
            <person name="Argiriou A."/>
            <person name="Flores M."/>
            <person name="Liguori R."/>
            <person name="Vitale D."/>
            <person name="Mannhaupt G."/>
            <person name="Haase D."/>
            <person name="Schoof H."/>
            <person name="Rudd S."/>
            <person name="Zaccaria P."/>
            <person name="Mewes H.-W."/>
            <person name="Mayer K.F.X."/>
            <person name="Kaul S."/>
            <person name="Town C.D."/>
            <person name="Koo H.L."/>
            <person name="Tallon L.J."/>
            <person name="Jenkins J."/>
            <person name="Rooney T."/>
            <person name="Rizzo M."/>
            <person name="Walts A."/>
            <person name="Utterback T."/>
            <person name="Fujii C.Y."/>
            <person name="Shea T.P."/>
            <person name="Creasy T.H."/>
            <person name="Haas B."/>
            <person name="Maiti R."/>
            <person name="Wu D."/>
            <person name="Peterson J."/>
            <person name="Van Aken S."/>
            <person name="Pai G."/>
            <person name="Militscher J."/>
            <person name="Sellers P."/>
            <person name="Gill J.E."/>
            <person name="Feldblyum T.V."/>
            <person name="Preuss D."/>
            <person name="Lin X."/>
            <person name="Nierman W.C."/>
            <person name="Salzberg S.L."/>
            <person name="White O."/>
            <person name="Venter J.C."/>
            <person name="Fraser C.M."/>
            <person name="Kaneko T."/>
            <person name="Nakamura Y."/>
            <person name="Sato S."/>
            <person name="Kato T."/>
            <person name="Asamizu E."/>
            <person name="Sasamoto S."/>
            <person name="Kimura T."/>
            <person name="Idesawa K."/>
            <person name="Kawashima K."/>
            <person name="Kishida Y."/>
            <person name="Kiyokawa C."/>
            <person name="Kohara M."/>
            <person name="Matsumoto M."/>
            <person name="Matsuno A."/>
            <person name="Muraki A."/>
            <person name="Nakayama S."/>
            <person name="Nakazaki N."/>
            <person name="Shinpo S."/>
            <person name="Takeuchi C."/>
            <person name="Wada T."/>
            <person name="Watanabe A."/>
            <person name="Yamada M."/>
            <person name="Yasuda M."/>
            <person name="Tabata S."/>
        </authorList>
    </citation>
    <scope>NUCLEOTIDE SEQUENCE [LARGE SCALE GENOMIC DNA]</scope>
    <source>
        <strain>cv. Columbia</strain>
    </source>
</reference>
<reference key="2">
    <citation type="journal article" date="2017" name="Plant J.">
        <title>Araport11: a complete reannotation of the Arabidopsis thaliana reference genome.</title>
        <authorList>
            <person name="Cheng C.Y."/>
            <person name="Krishnakumar V."/>
            <person name="Chan A.P."/>
            <person name="Thibaud-Nissen F."/>
            <person name="Schobel S."/>
            <person name="Town C.D."/>
        </authorList>
    </citation>
    <scope>GENOME REANNOTATION</scope>
    <source>
        <strain>cv. Columbia</strain>
    </source>
</reference>
<accession>Q9LX87</accession>
<organism>
    <name type="scientific">Arabidopsis thaliana</name>
    <name type="common">Mouse-ear cress</name>
    <dbReference type="NCBI Taxonomy" id="3702"/>
    <lineage>
        <taxon>Eukaryota</taxon>
        <taxon>Viridiplantae</taxon>
        <taxon>Streptophyta</taxon>
        <taxon>Embryophyta</taxon>
        <taxon>Tracheophyta</taxon>
        <taxon>Spermatophyta</taxon>
        <taxon>Magnoliopsida</taxon>
        <taxon>eudicotyledons</taxon>
        <taxon>Gunneridae</taxon>
        <taxon>Pentapetalae</taxon>
        <taxon>rosids</taxon>
        <taxon>malvids</taxon>
        <taxon>Brassicales</taxon>
        <taxon>Brassicaceae</taxon>
        <taxon>Camelineae</taxon>
        <taxon>Arabidopsis</taxon>
    </lineage>
</organism>
<sequence>MTTKEKNKSSNSPPPTSFSSLPDDIVLNCLARVSRFHYPTLSLVCKGFRSLLDSRELHATRSCIGKTESFLYVCLDLHRNCYPDCPPRWFIVSPITKQKLKPIPSVTCQSSTVVSIGSKIYIIGGFVDGHSSRRLIVLDCPSHGWRRLPEMRVPRQNAAADVINDKIYVIGGSSSNNIEDWGEVYDPKTQTWEPVLPTTLDLTVQMSVVPGSLVMSGKVYDMNGLKLNFQKNICLVEIENMMCQTKVCEGVLVWCEPEEDRGWCPVDGLEGLPNRPTSPGYLTSVAHSDRGRRVTVWWESAVLHRLGPKWTKECKTEIWCAEISFERRGVGKVCGFVEWSKNVFTKDDYKTYKLPASLSDFFLNSTIVTY</sequence>
<protein>
    <recommendedName>
        <fullName>Putative F-box/kelch-repeat protein At3g46050</fullName>
    </recommendedName>
</protein>
<evidence type="ECO:0000255" key="1">
    <source>
        <dbReference type="PROSITE-ProRule" id="PRU00080"/>
    </source>
</evidence>
<name>FBK74_ARATH</name>
<dbReference type="EMBL" id="AL355775">
    <property type="protein sequence ID" value="CAB90932.1"/>
    <property type="molecule type" value="Genomic_DNA"/>
</dbReference>
<dbReference type="EMBL" id="CP002686">
    <property type="protein sequence ID" value="AEE78105.1"/>
    <property type="molecule type" value="Genomic_DNA"/>
</dbReference>
<dbReference type="PIR" id="T49246">
    <property type="entry name" value="T49246"/>
</dbReference>
<dbReference type="RefSeq" id="NP_190191.1">
    <property type="nucleotide sequence ID" value="NM_114474.1"/>
</dbReference>
<dbReference type="SMR" id="Q9LX87"/>
<dbReference type="BioGRID" id="9068">
    <property type="interactions" value="1"/>
</dbReference>
<dbReference type="PaxDb" id="3702-AT3G46050.1"/>
<dbReference type="EnsemblPlants" id="AT3G46050.1">
    <property type="protein sequence ID" value="AT3G46050.1"/>
    <property type="gene ID" value="AT3G46050"/>
</dbReference>
<dbReference type="GeneID" id="823748"/>
<dbReference type="Gramene" id="AT3G46050.1">
    <property type="protein sequence ID" value="AT3G46050.1"/>
    <property type="gene ID" value="AT3G46050"/>
</dbReference>
<dbReference type="KEGG" id="ath:AT3G46050"/>
<dbReference type="Araport" id="AT3G46050"/>
<dbReference type="TAIR" id="AT3G46050"/>
<dbReference type="eggNOG" id="KOG1072">
    <property type="taxonomic scope" value="Eukaryota"/>
</dbReference>
<dbReference type="HOGENOM" id="CLU_032521_1_2_1"/>
<dbReference type="InParanoid" id="Q9LX87"/>
<dbReference type="OMA" id="SEIEIWC"/>
<dbReference type="PhylomeDB" id="Q9LX87"/>
<dbReference type="PRO" id="PR:Q9LX87"/>
<dbReference type="Proteomes" id="UP000006548">
    <property type="component" value="Chromosome 3"/>
</dbReference>
<dbReference type="ExpressionAtlas" id="Q9LX87">
    <property type="expression patterns" value="baseline"/>
</dbReference>
<dbReference type="CDD" id="cd22152">
    <property type="entry name" value="F-box_AtAFR-like"/>
    <property type="match status" value="1"/>
</dbReference>
<dbReference type="Gene3D" id="2.120.10.80">
    <property type="entry name" value="Kelch-type beta propeller"/>
    <property type="match status" value="1"/>
</dbReference>
<dbReference type="InterPro" id="IPR036047">
    <property type="entry name" value="F-box-like_dom_sf"/>
</dbReference>
<dbReference type="InterPro" id="IPR050354">
    <property type="entry name" value="F-box/kelch-repeat_ARATH"/>
</dbReference>
<dbReference type="InterPro" id="IPR001810">
    <property type="entry name" value="F-box_dom"/>
</dbReference>
<dbReference type="InterPro" id="IPR015915">
    <property type="entry name" value="Kelch-typ_b-propeller"/>
</dbReference>
<dbReference type="InterPro" id="IPR006652">
    <property type="entry name" value="Kelch_1"/>
</dbReference>
<dbReference type="PANTHER" id="PTHR24414:SF196">
    <property type="entry name" value="BNACNNG12250D PROTEIN"/>
    <property type="match status" value="1"/>
</dbReference>
<dbReference type="PANTHER" id="PTHR24414">
    <property type="entry name" value="F-BOX/KELCH-REPEAT PROTEIN SKIP4"/>
    <property type="match status" value="1"/>
</dbReference>
<dbReference type="Pfam" id="PF00646">
    <property type="entry name" value="F-box"/>
    <property type="match status" value="1"/>
</dbReference>
<dbReference type="Pfam" id="PF25210">
    <property type="entry name" value="Kelch_FKB95"/>
    <property type="match status" value="1"/>
</dbReference>
<dbReference type="SMART" id="SM00256">
    <property type="entry name" value="FBOX"/>
    <property type="match status" value="1"/>
</dbReference>
<dbReference type="SMART" id="SM00612">
    <property type="entry name" value="Kelch"/>
    <property type="match status" value="2"/>
</dbReference>
<dbReference type="SUPFAM" id="SSF81383">
    <property type="entry name" value="F-box domain"/>
    <property type="match status" value="1"/>
</dbReference>
<dbReference type="SUPFAM" id="SSF117281">
    <property type="entry name" value="Kelch motif"/>
    <property type="match status" value="1"/>
</dbReference>
<dbReference type="PROSITE" id="PS50181">
    <property type="entry name" value="FBOX"/>
    <property type="match status" value="1"/>
</dbReference>
<feature type="chain" id="PRO_0000283234" description="Putative F-box/kelch-repeat protein At3g46050">
    <location>
        <begin position="1"/>
        <end position="370"/>
    </location>
</feature>
<feature type="domain" description="F-box" evidence="1">
    <location>
        <begin position="15"/>
        <end position="61"/>
    </location>
</feature>
<feature type="repeat" description="Kelch 1">
    <location>
        <begin position="119"/>
        <end position="165"/>
    </location>
</feature>
<feature type="repeat" description="Kelch 2">
    <location>
        <begin position="167"/>
        <end position="212"/>
    </location>
</feature>